<evidence type="ECO:0000255" key="1">
    <source>
        <dbReference type="HAMAP-Rule" id="MF_00676"/>
    </source>
</evidence>
<accession>B5R2V9</accession>
<feature type="chain" id="PRO_1000131632" description="UPF0260 protein YcgN">
    <location>
        <begin position="1"/>
        <end position="153"/>
    </location>
</feature>
<sequence length="153" mass="18010">MADTLMSDTPFWQRKTLDEMTDAEWESLCDGCGQCCLHKLMDEDTDEIYFTNVACRQLNIKTCQCRHYERRFEFEPDCIKLTRENLPDFEWLPMTCAYRLLAEGKPLPTWHPLLTGSKAAMHGERISVRHIAVKESEVRDWQDHILNKPSWAE</sequence>
<dbReference type="EMBL" id="AM933172">
    <property type="protein sequence ID" value="CAR32806.1"/>
    <property type="molecule type" value="Genomic_DNA"/>
</dbReference>
<dbReference type="SMR" id="B5R2V9"/>
<dbReference type="KEGG" id="set:SEN1226"/>
<dbReference type="HOGENOM" id="CLU_109769_0_1_6"/>
<dbReference type="Proteomes" id="UP000000613">
    <property type="component" value="Chromosome"/>
</dbReference>
<dbReference type="HAMAP" id="MF_00676">
    <property type="entry name" value="UPF0260"/>
    <property type="match status" value="1"/>
</dbReference>
<dbReference type="InterPro" id="IPR005358">
    <property type="entry name" value="Puta_zinc/iron-chelating_dom"/>
</dbReference>
<dbReference type="InterPro" id="IPR008228">
    <property type="entry name" value="UCP006173"/>
</dbReference>
<dbReference type="NCBIfam" id="NF003498">
    <property type="entry name" value="PRK05170.1-1"/>
    <property type="match status" value="1"/>
</dbReference>
<dbReference type="NCBIfam" id="NF003501">
    <property type="entry name" value="PRK05170.1-5"/>
    <property type="match status" value="1"/>
</dbReference>
<dbReference type="NCBIfam" id="NF003503">
    <property type="entry name" value="PRK05170.2-1"/>
    <property type="match status" value="1"/>
</dbReference>
<dbReference type="NCBIfam" id="NF003507">
    <property type="entry name" value="PRK05170.2-5"/>
    <property type="match status" value="1"/>
</dbReference>
<dbReference type="PANTHER" id="PTHR37421">
    <property type="entry name" value="UPF0260 PROTEIN YCGN"/>
    <property type="match status" value="1"/>
</dbReference>
<dbReference type="PANTHER" id="PTHR37421:SF1">
    <property type="entry name" value="UPF0260 PROTEIN YCGN"/>
    <property type="match status" value="1"/>
</dbReference>
<dbReference type="Pfam" id="PF03692">
    <property type="entry name" value="CxxCxxCC"/>
    <property type="match status" value="1"/>
</dbReference>
<dbReference type="PIRSF" id="PIRSF006173">
    <property type="entry name" value="UCP006173"/>
    <property type="match status" value="1"/>
</dbReference>
<organism>
    <name type="scientific">Salmonella enteritidis PT4 (strain P125109)</name>
    <dbReference type="NCBI Taxonomy" id="550537"/>
    <lineage>
        <taxon>Bacteria</taxon>
        <taxon>Pseudomonadati</taxon>
        <taxon>Pseudomonadota</taxon>
        <taxon>Gammaproteobacteria</taxon>
        <taxon>Enterobacterales</taxon>
        <taxon>Enterobacteriaceae</taxon>
        <taxon>Salmonella</taxon>
    </lineage>
</organism>
<proteinExistence type="inferred from homology"/>
<gene>
    <name evidence="1" type="primary">ycgN</name>
    <name type="ordered locus">SEN1226</name>
</gene>
<comment type="similarity">
    <text evidence="1">Belongs to the UPF0260 family.</text>
</comment>
<reference key="1">
    <citation type="journal article" date="2008" name="Genome Res.">
        <title>Comparative genome analysis of Salmonella enteritidis PT4 and Salmonella gallinarum 287/91 provides insights into evolutionary and host adaptation pathways.</title>
        <authorList>
            <person name="Thomson N.R."/>
            <person name="Clayton D.J."/>
            <person name="Windhorst D."/>
            <person name="Vernikos G."/>
            <person name="Davidson S."/>
            <person name="Churcher C."/>
            <person name="Quail M.A."/>
            <person name="Stevens M."/>
            <person name="Jones M.A."/>
            <person name="Watson M."/>
            <person name="Barron A."/>
            <person name="Layton A."/>
            <person name="Pickard D."/>
            <person name="Kingsley R.A."/>
            <person name="Bignell A."/>
            <person name="Clark L."/>
            <person name="Harris B."/>
            <person name="Ormond D."/>
            <person name="Abdellah Z."/>
            <person name="Brooks K."/>
            <person name="Cherevach I."/>
            <person name="Chillingworth T."/>
            <person name="Woodward J."/>
            <person name="Norberczak H."/>
            <person name="Lord A."/>
            <person name="Arrowsmith C."/>
            <person name="Jagels K."/>
            <person name="Moule S."/>
            <person name="Mungall K."/>
            <person name="Saunders M."/>
            <person name="Whitehead S."/>
            <person name="Chabalgoity J.A."/>
            <person name="Maskell D."/>
            <person name="Humphreys T."/>
            <person name="Roberts M."/>
            <person name="Barrow P.A."/>
            <person name="Dougan G."/>
            <person name="Parkhill J."/>
        </authorList>
    </citation>
    <scope>NUCLEOTIDE SEQUENCE [LARGE SCALE GENOMIC DNA]</scope>
    <source>
        <strain>P125109</strain>
    </source>
</reference>
<protein>
    <recommendedName>
        <fullName evidence="1">UPF0260 protein YcgN</fullName>
    </recommendedName>
</protein>
<name>YCGN_SALEP</name>